<evidence type="ECO:0000250" key="1"/>
<evidence type="ECO:0000255" key="2"/>
<evidence type="ECO:0000305" key="3"/>
<accession>Q9EZK4</accession>
<gene>
    <name type="primary">sarU</name>
    <name type="synonym">rlp</name>
    <name type="synonym">sarH2</name>
</gene>
<organism>
    <name type="scientific">Staphylococcus aureus</name>
    <dbReference type="NCBI Taxonomy" id="1280"/>
    <lineage>
        <taxon>Bacteria</taxon>
        <taxon>Bacillati</taxon>
        <taxon>Bacillota</taxon>
        <taxon>Bacilli</taxon>
        <taxon>Bacillales</taxon>
        <taxon>Staphylococcaceae</taxon>
        <taxon>Staphylococcus</taxon>
    </lineage>
</organism>
<protein>
    <recommendedName>
        <fullName>HTH-type transcriptional regulator SarU</fullName>
    </recommendedName>
    <alternativeName>
        <fullName>Staphylococcal accessory regulator U</fullName>
    </alternativeName>
</protein>
<reference key="1">
    <citation type="submission" date="2001-04" db="EMBL/GenBank/DDBJ databases">
        <title>The isolation and characterization of rlp, an activator of the Staphylococcus aureus virulence factor regulator pathway encoded by agr.</title>
        <authorList>
            <person name="McNamara P.J."/>
            <person name="Milligan-Monroe K."/>
            <person name="Proctor R.A."/>
        </authorList>
    </citation>
    <scope>NUCLEOTIDE SEQUENCE [GENOMIC DNA]</scope>
</reference>
<keyword id="KW-0010">Activator</keyword>
<keyword id="KW-0963">Cytoplasm</keyword>
<keyword id="KW-0238">DNA-binding</keyword>
<keyword id="KW-0677">Repeat</keyword>
<keyword id="KW-0804">Transcription</keyword>
<keyword id="KW-0805">Transcription regulation</keyword>
<keyword id="KW-0843">Virulence</keyword>
<proteinExistence type="inferred from homology"/>
<dbReference type="EMBL" id="AF288788">
    <property type="protein sequence ID" value="AAG45334.2"/>
    <property type="molecule type" value="Genomic_DNA"/>
</dbReference>
<dbReference type="RefSeq" id="WP_000386369.1">
    <property type="nucleotide sequence ID" value="NZ_UHCI01000002.1"/>
</dbReference>
<dbReference type="SMR" id="Q9EZK4"/>
<dbReference type="PATRIC" id="fig|1280.3350.peg.2433"/>
<dbReference type="OMA" id="DERCILI"/>
<dbReference type="GO" id="GO:0005737">
    <property type="term" value="C:cytoplasm"/>
    <property type="evidence" value="ECO:0007669"/>
    <property type="project" value="UniProtKB-SubCell"/>
</dbReference>
<dbReference type="GO" id="GO:0003677">
    <property type="term" value="F:DNA binding"/>
    <property type="evidence" value="ECO:0007669"/>
    <property type="project" value="UniProtKB-KW"/>
</dbReference>
<dbReference type="GO" id="GO:0003700">
    <property type="term" value="F:DNA-binding transcription factor activity"/>
    <property type="evidence" value="ECO:0007669"/>
    <property type="project" value="InterPro"/>
</dbReference>
<dbReference type="GO" id="GO:0006950">
    <property type="term" value="P:response to stress"/>
    <property type="evidence" value="ECO:0007669"/>
    <property type="project" value="TreeGrafter"/>
</dbReference>
<dbReference type="Gene3D" id="1.10.10.10">
    <property type="entry name" value="Winged helix-like DNA-binding domain superfamily/Winged helix DNA-binding domain"/>
    <property type="match status" value="2"/>
</dbReference>
<dbReference type="InterPro" id="IPR039422">
    <property type="entry name" value="MarR/SlyA-like"/>
</dbReference>
<dbReference type="InterPro" id="IPR010166">
    <property type="entry name" value="SarA/Rot_dom"/>
</dbReference>
<dbReference type="InterPro" id="IPR055166">
    <property type="entry name" value="Transc_reg_Sar_Rot_HTH"/>
</dbReference>
<dbReference type="InterPro" id="IPR036388">
    <property type="entry name" value="WH-like_DNA-bd_sf"/>
</dbReference>
<dbReference type="InterPro" id="IPR036390">
    <property type="entry name" value="WH_DNA-bd_sf"/>
</dbReference>
<dbReference type="NCBIfam" id="TIGR01889">
    <property type="entry name" value="Staph_reg_Sar"/>
    <property type="match status" value="2"/>
</dbReference>
<dbReference type="PANTHER" id="PTHR33164:SF5">
    <property type="entry name" value="ORGANIC HYDROPEROXIDE RESISTANCE TRANSCRIPTIONAL REGULATOR"/>
    <property type="match status" value="1"/>
</dbReference>
<dbReference type="PANTHER" id="PTHR33164">
    <property type="entry name" value="TRANSCRIPTIONAL REGULATOR, MARR FAMILY"/>
    <property type="match status" value="1"/>
</dbReference>
<dbReference type="Pfam" id="PF22381">
    <property type="entry name" value="Staph_reg_Sar_Rot"/>
    <property type="match status" value="2"/>
</dbReference>
<dbReference type="SUPFAM" id="SSF46785">
    <property type="entry name" value="Winged helix' DNA-binding domain"/>
    <property type="match status" value="2"/>
</dbReference>
<sequence>MDYQTFEKVNKFINVKAYIFFLTQELKQQYKLSLKELLILAYFYYKNEHSISLKEIIGDILYKQSDVVKNIKSLSKKGFINKSRNEADERRIFVSVTPIQRKKIACVINELDKIIKGFNKERDYIKYQWAPKYSKEFFILFMNIMYSKDFLKYRFNLTFLDLSILYVISSRKNEILNLKDLFESIRFMYPQIVRSVNRLNNKGMLIKERSLADERIVLIKINKIQYNTIKSIFTDTSKILKPRKFFF</sequence>
<name>SARU_STAAU</name>
<feature type="chain" id="PRO_0000219602" description="HTH-type transcriptional regulator SarU">
    <location>
        <begin position="1"/>
        <end position="247"/>
    </location>
</feature>
<feature type="DNA-binding region" description="H-T-H motif" evidence="2">
    <location>
        <begin position="53"/>
        <end position="76"/>
    </location>
</feature>
<feature type="DNA-binding region" description="H-T-H motif" evidence="2">
    <location>
        <begin position="178"/>
        <end position="201"/>
    </location>
</feature>
<comment type="function">
    <text evidence="1">Positive regulator of RNAII and RNAIII in a cell density-dependent manner. It can contribute to the expression of virulence genes controlled by agr. May also regulate target genes via an agr-independent pathway (By similarity).</text>
</comment>
<comment type="subcellular location">
    <subcellularLocation>
        <location evidence="1">Cytoplasm</location>
    </subcellularLocation>
</comment>
<comment type="similarity">
    <text evidence="3">Belongs to the SarA family.</text>
</comment>